<sequence>MASSPGLDPHPLPMLQLQEVGSSKVSERPRSPGLLPAVYSPPLGMDSHTVCIPSPYTDSSHEYNHSHGPLTFYSPSVLSYSRPPITNSPSSLCPSLSPSAFWPSHNHPTMPSLTLHCPESIVYNEPSPHAPWLESKAHSINASSSSIIGCNKSLVKRSEEGVEDMNSSLCSSAVGKADMHFCAVCHDYASGYHYGVWSCEGCKAFFKRSIQGHNDYICPATNQCTIDKNRRKSCQACRLRKCYEVGMMKCGVRRERCSYRGARHRRGGLQPRDPTGRGLVRVGLGSRAQRHLHLEAPLTPLAPILQAKHVHLSAMSPEEFISRIMDAEPPEIYLMEDLKKPFTEASMMMSLTNLADKELVFMISWAKKIPGFVELSLADQINLLKCCWLEILMLGLMWRSVDHPGKLIFSPDFKLNREEGQCVEGIMEIFDMLLAGTSRFRELKLQREEYVCLKAMILLNSNLCTSSPQTAEELESRNKLLRLLDSVIDALVWAISKMGLTTQQQTLRLGHLTMLLSHIRHVSNKGMDHLSTMKRKNVVLVYDLLLEMLDANTSSGGSQPSSSPSSETYSDQHQYPQPPSHLHPGSEQTTADHAIVPPLGPTDDPILDGHLDAMPLQSSPPFQSLVVPHMDTNDYIHPEQWSLGTGDAAPSVEPTDYITTERVVMETALVTQP</sequence>
<proteinExistence type="evidence at transcript level"/>
<name>ESR2_MICUN</name>
<evidence type="ECO:0000250" key="1"/>
<evidence type="ECO:0000255" key="2">
    <source>
        <dbReference type="PROSITE-ProRule" id="PRU00407"/>
    </source>
</evidence>
<evidence type="ECO:0000255" key="3">
    <source>
        <dbReference type="PROSITE-ProRule" id="PRU01189"/>
    </source>
</evidence>
<evidence type="ECO:0000256" key="4">
    <source>
        <dbReference type="SAM" id="MobiDB-lite"/>
    </source>
</evidence>
<evidence type="ECO:0000305" key="5"/>
<comment type="function">
    <text>Binds estrogens with an affinity similar to that of ER-alpha, and activates expression of reporter genes containing estrogen response elements (ERE) in an estrogen-dependent manner.</text>
</comment>
<comment type="subunit">
    <text evidence="1">Binds DNA as a homodimer. Can form a heterodimer with ER-alpha (By similarity).</text>
</comment>
<comment type="subcellular location">
    <subcellularLocation>
        <location>Nucleus</location>
    </subcellularLocation>
</comment>
<comment type="tissue specificity">
    <text>Abundant in the liver and testes, less abundant in the ovary and barely detectable in the muscle.</text>
</comment>
<comment type="domain">
    <text>Composed of three domains: a modulating N-terminal domain, a DNA-binding domain and a C-terminal ligand-binding domain.</text>
</comment>
<comment type="similarity">
    <text evidence="5">Belongs to the nuclear hormone receptor family. NR3 subfamily.</text>
</comment>
<dbReference type="EMBL" id="AF298181">
    <property type="protein sequence ID" value="AAG16711.1"/>
    <property type="molecule type" value="mRNA"/>
</dbReference>
<dbReference type="SMR" id="P57781"/>
<dbReference type="GO" id="GO:0005634">
    <property type="term" value="C:nucleus"/>
    <property type="evidence" value="ECO:0007669"/>
    <property type="project" value="UniProtKB-SubCell"/>
</dbReference>
<dbReference type="GO" id="GO:0042562">
    <property type="term" value="F:hormone binding"/>
    <property type="evidence" value="ECO:0007669"/>
    <property type="project" value="UniProtKB-ARBA"/>
</dbReference>
<dbReference type="GO" id="GO:0030284">
    <property type="term" value="F:nuclear estrogen receptor activity"/>
    <property type="evidence" value="ECO:0007669"/>
    <property type="project" value="InterPro"/>
</dbReference>
<dbReference type="GO" id="GO:0043565">
    <property type="term" value="F:sequence-specific DNA binding"/>
    <property type="evidence" value="ECO:0007669"/>
    <property type="project" value="InterPro"/>
</dbReference>
<dbReference type="GO" id="GO:0005496">
    <property type="term" value="F:steroid binding"/>
    <property type="evidence" value="ECO:0000250"/>
    <property type="project" value="UniProtKB"/>
</dbReference>
<dbReference type="GO" id="GO:0008270">
    <property type="term" value="F:zinc ion binding"/>
    <property type="evidence" value="ECO:0007669"/>
    <property type="project" value="UniProtKB-KW"/>
</dbReference>
<dbReference type="GO" id="GO:0071392">
    <property type="term" value="P:cellular response to estradiol stimulus"/>
    <property type="evidence" value="ECO:0007669"/>
    <property type="project" value="InterPro"/>
</dbReference>
<dbReference type="GO" id="GO:0030520">
    <property type="term" value="P:estrogen receptor signaling pathway"/>
    <property type="evidence" value="ECO:0007669"/>
    <property type="project" value="InterPro"/>
</dbReference>
<dbReference type="CDD" id="cd07171">
    <property type="entry name" value="NR_DBD_ER"/>
    <property type="match status" value="1"/>
</dbReference>
<dbReference type="CDD" id="cd06949">
    <property type="entry name" value="NR_LBD_ER"/>
    <property type="match status" value="1"/>
</dbReference>
<dbReference type="FunFam" id="1.10.565.10:FF:000010">
    <property type="entry name" value="Estrogen receptor"/>
    <property type="match status" value="1"/>
</dbReference>
<dbReference type="FunFam" id="3.30.50.10:FF:000014">
    <property type="entry name" value="Estrogen receptor beta"/>
    <property type="match status" value="1"/>
</dbReference>
<dbReference type="Gene3D" id="3.30.50.10">
    <property type="entry name" value="Erythroid Transcription Factor GATA-1, subunit A"/>
    <property type="match status" value="1"/>
</dbReference>
<dbReference type="Gene3D" id="1.10.565.10">
    <property type="entry name" value="Retinoid X Receptor"/>
    <property type="match status" value="1"/>
</dbReference>
<dbReference type="InterPro" id="IPR021064">
    <property type="entry name" value="ER-beta-like_N"/>
</dbReference>
<dbReference type="InterPro" id="IPR028355">
    <property type="entry name" value="ER-beta/gamma"/>
</dbReference>
<dbReference type="InterPro" id="IPR024178">
    <property type="entry name" value="Est_rcpt/est-rel_rcp"/>
</dbReference>
<dbReference type="InterPro" id="IPR035500">
    <property type="entry name" value="NHR-like_dom_sf"/>
</dbReference>
<dbReference type="InterPro" id="IPR000536">
    <property type="entry name" value="Nucl_hrmn_rcpt_lig-bd"/>
</dbReference>
<dbReference type="InterPro" id="IPR050200">
    <property type="entry name" value="Nuclear_hormone_rcpt_NR3"/>
</dbReference>
<dbReference type="InterPro" id="IPR001723">
    <property type="entry name" value="Nuclear_hrmn_rcpt"/>
</dbReference>
<dbReference type="InterPro" id="IPR001628">
    <property type="entry name" value="Znf_hrmn_rcpt"/>
</dbReference>
<dbReference type="InterPro" id="IPR013088">
    <property type="entry name" value="Znf_NHR/GATA"/>
</dbReference>
<dbReference type="PANTHER" id="PTHR48092">
    <property type="entry name" value="KNIRPS-RELATED PROTEIN-RELATED"/>
    <property type="match status" value="1"/>
</dbReference>
<dbReference type="Pfam" id="PF12497">
    <property type="entry name" value="ERbeta_N"/>
    <property type="match status" value="1"/>
</dbReference>
<dbReference type="Pfam" id="PF00104">
    <property type="entry name" value="Hormone_recep"/>
    <property type="match status" value="1"/>
</dbReference>
<dbReference type="Pfam" id="PF00105">
    <property type="entry name" value="zf-C4"/>
    <property type="match status" value="1"/>
</dbReference>
<dbReference type="PIRSF" id="PIRSF500102">
    <property type="entry name" value="ER-b"/>
    <property type="match status" value="1"/>
</dbReference>
<dbReference type="PIRSF" id="PIRSF002527">
    <property type="entry name" value="ER-like_NR"/>
    <property type="match status" value="1"/>
</dbReference>
<dbReference type="PRINTS" id="PR00398">
    <property type="entry name" value="STRDHORMONER"/>
</dbReference>
<dbReference type="PRINTS" id="PR00047">
    <property type="entry name" value="STROIDFINGER"/>
</dbReference>
<dbReference type="SMART" id="SM00430">
    <property type="entry name" value="HOLI"/>
    <property type="match status" value="1"/>
</dbReference>
<dbReference type="SMART" id="SM00399">
    <property type="entry name" value="ZnF_C4"/>
    <property type="match status" value="1"/>
</dbReference>
<dbReference type="SUPFAM" id="SSF57716">
    <property type="entry name" value="Glucocorticoid receptor-like (DNA-binding domain)"/>
    <property type="match status" value="1"/>
</dbReference>
<dbReference type="SUPFAM" id="SSF48508">
    <property type="entry name" value="Nuclear receptor ligand-binding domain"/>
    <property type="match status" value="1"/>
</dbReference>
<dbReference type="PROSITE" id="PS51843">
    <property type="entry name" value="NR_LBD"/>
    <property type="match status" value="1"/>
</dbReference>
<dbReference type="PROSITE" id="PS00031">
    <property type="entry name" value="NUCLEAR_REC_DBD_1"/>
    <property type="match status" value="1"/>
</dbReference>
<dbReference type="PROSITE" id="PS51030">
    <property type="entry name" value="NUCLEAR_REC_DBD_2"/>
    <property type="match status" value="1"/>
</dbReference>
<accession>P57781</accession>
<reference key="1">
    <citation type="journal article" date="2000" name="Proc. Natl. Acad. Sci. U.S.A.">
        <title>Identification of a third distinct estrogen receptor and reclassification of estrogen receptors in teleosts.</title>
        <authorList>
            <person name="Hawkins M.B."/>
            <person name="Thornton J.W."/>
            <person name="Crews D."/>
            <person name="Skipper J.K."/>
            <person name="Dotte A."/>
            <person name="Thomas P."/>
        </authorList>
    </citation>
    <scope>NUCLEOTIDE SEQUENCE [MRNA]</scope>
    <source>
        <tissue>Ovary</tissue>
    </source>
</reference>
<gene>
    <name type="primary">esr2</name>
    <name type="synonym">nr3a2</name>
</gene>
<protein>
    <recommendedName>
        <fullName>Estrogen receptor beta</fullName>
        <shortName>ER-beta</shortName>
    </recommendedName>
    <alternativeName>
        <fullName>Nuclear receptor subfamily 3 group A member 2</fullName>
    </alternativeName>
</protein>
<feature type="chain" id="PRO_0000053655" description="Estrogen receptor beta">
    <location>
        <begin position="1"/>
        <end position="673"/>
    </location>
</feature>
<feature type="domain" description="NR LBD" evidence="3">
    <location>
        <begin position="316"/>
        <end position="552"/>
    </location>
</feature>
<feature type="DNA-binding region" description="Nuclear receptor" evidence="2">
    <location>
        <begin position="182"/>
        <end position="247"/>
    </location>
</feature>
<feature type="zinc finger region" description="NR C4-type" evidence="2">
    <location>
        <begin position="182"/>
        <end position="202"/>
    </location>
</feature>
<feature type="zinc finger region" description="NR C4-type" evidence="2">
    <location>
        <begin position="218"/>
        <end position="242"/>
    </location>
</feature>
<feature type="region of interest" description="Modulating">
    <location>
        <begin position="1"/>
        <end position="181"/>
    </location>
</feature>
<feature type="region of interest" description="Disordered" evidence="4">
    <location>
        <begin position="553"/>
        <end position="602"/>
    </location>
</feature>
<feature type="compositionally biased region" description="Low complexity" evidence="4">
    <location>
        <begin position="554"/>
        <end position="566"/>
    </location>
</feature>
<keyword id="KW-0238">DNA-binding</keyword>
<keyword id="KW-0446">Lipid-binding</keyword>
<keyword id="KW-0479">Metal-binding</keyword>
<keyword id="KW-0539">Nucleus</keyword>
<keyword id="KW-0675">Receptor</keyword>
<keyword id="KW-0754">Steroid-binding</keyword>
<keyword id="KW-0804">Transcription</keyword>
<keyword id="KW-0805">Transcription regulation</keyword>
<keyword id="KW-0862">Zinc</keyword>
<keyword id="KW-0863">Zinc-finger</keyword>
<organism>
    <name type="scientific">Micropogonias undulatus</name>
    <name type="common">Atlantic croaker</name>
    <dbReference type="NCBI Taxonomy" id="29154"/>
    <lineage>
        <taxon>Eukaryota</taxon>
        <taxon>Metazoa</taxon>
        <taxon>Chordata</taxon>
        <taxon>Craniata</taxon>
        <taxon>Vertebrata</taxon>
        <taxon>Euteleostomi</taxon>
        <taxon>Actinopterygii</taxon>
        <taxon>Neopterygii</taxon>
        <taxon>Teleostei</taxon>
        <taxon>Neoteleostei</taxon>
        <taxon>Acanthomorphata</taxon>
        <taxon>Eupercaria</taxon>
        <taxon>Sciaenidae</taxon>
        <taxon>Micropogonias</taxon>
    </lineage>
</organism>